<proteinExistence type="evidence at protein level"/>
<sequence length="900" mass="98746">MYSKVFLKPHCEPEQPAALPLFQPQLVQGGRPDGYWVEAFPFRSDSSKCPNIIGYGLGTYDMKSDIQMLVNPYATTNNQSSSWTPVPLAKLDFPVAMHYADITKNGFNDVIITDQYGSSMDDIWAYGGRVSWLENPGELRDNWTMRTIGHSPGMHRLKAGHFTRTDRVQVVAVPIVVASSDLTTPADVIIFTAPDDPRSEQLWQRDVVGTRHLVHEVAIVPAAETDGEMRFDQIILAGRDGVDCLWYDGARWQRHLVGTGLPEERGDPYWGAGSAAVGRVGDDYAGYICSAEAFHGNTVSVYTKPAGSPTGIVRAEWTRHVLDVFGPLNGKHTGSIHQVVCADIDGDGEDEFLVAMMGADPPDFQRTGVWCYKLVDRTNMKFSKTKVSSVSAGRIATANFHSQGSEVDIATISYSVPGYFESPNPSINVFLSTGILAERLDEEVMLRVVRAGSTRFKTEMEFLDVAGKKLTLVVLPPFARLDVERNVSGVKVMAGTVCWADENGKHERVPATRPFGCESMIVSADYLESGEEGAILVLYKPSSTSGRPPFRSMDELVAHNLFPAYVPDSVRAMKFPWVRCADRPWAHGRFKDLDFFNLIGFHVNFADDSAAVLAHVQLWTAGIGVSAGFHNHVEASFCEIHACIANGTGRGGMRWATVPDANFNPDSPNLEDTELIVVPDMHEHGPLWRTRPDGHPLLRMNDTIDYPWHAWLAGAGNPSPQAFDVWVAFEFPGFETFSTPPPPRVLEPGRYAIRFGDPHQTASLALQKNDATDGTPVLALLDLDGGPSPQAWNISHVPGTDMYEIAHAKTGSLVCARWPPVKNQRVAGTHSPAAMGLTSRWAVTKNTKGQITFRLPEAPDHGPLFLSVSAIRHQQEADAIPVIVQGDSIELSAWSLVPAN</sequence>
<comment type="function">
    <text evidence="1 2 3">A bifunctional enzyme which catalyzes the dehydration of anhydrofructose into ascopyrone M, and the isomerization of ascopyrone M into microthecin (PubMed:15716041, PubMed:22330145). To a lesser extent, can also act on 2-dehydro-D-glucopyranose (D-glucosone), leading to the antibiotic cortalcerone (PubMed:15716041, PubMed:8352649).</text>
</comment>
<comment type="catalytic activity">
    <reaction evidence="1 2">
        <text>1,5-anhydro-D-fructose = microthecin + H2O</text>
        <dbReference type="Rhea" id="RHEA:12100"/>
        <dbReference type="ChEBI" id="CHEBI:15377"/>
        <dbReference type="ChEBI" id="CHEBI:16715"/>
        <dbReference type="ChEBI" id="CHEBI:51835"/>
        <dbReference type="EC" id="4.2.1.110"/>
    </reaction>
    <physiologicalReaction direction="left-to-right" evidence="8">
        <dbReference type="Rhea" id="RHEA:12101"/>
    </physiologicalReaction>
</comment>
<comment type="catalytic activity">
    <reaction evidence="1">
        <text>1,5-anhydro-D-fructose = ascopyrone M + H2O</text>
        <dbReference type="Rhea" id="RHEA:15725"/>
        <dbReference type="ChEBI" id="CHEBI:15377"/>
        <dbReference type="ChEBI" id="CHEBI:16715"/>
        <dbReference type="ChEBI" id="CHEBI:50070"/>
    </reaction>
    <physiologicalReaction direction="left-to-right" evidence="8">
        <dbReference type="Rhea" id="RHEA:15726"/>
    </physiologicalReaction>
</comment>
<comment type="catalytic activity">
    <reaction evidence="1">
        <text>ascopyrone M = microthecin</text>
        <dbReference type="Rhea" id="RHEA:13745"/>
        <dbReference type="ChEBI" id="CHEBI:50070"/>
        <dbReference type="ChEBI" id="CHEBI:51835"/>
    </reaction>
    <physiologicalReaction direction="left-to-right" evidence="8">
        <dbReference type="Rhea" id="RHEA:13746"/>
    </physiologicalReaction>
</comment>
<comment type="catalytic activity">
    <reaction evidence="1 3 11">
        <text>2-dehydro-D-glucose = cortalcerone + H2O</text>
        <dbReference type="Rhea" id="RHEA:75407"/>
        <dbReference type="ChEBI" id="CHEBI:15377"/>
        <dbReference type="ChEBI" id="CHEBI:16609"/>
        <dbReference type="ChEBI" id="CHEBI:194327"/>
        <dbReference type="EC" id="4.2.1.110"/>
    </reaction>
    <physiologicalReaction direction="left-to-right" evidence="8 10">
        <dbReference type="Rhea" id="RHEA:75408"/>
    </physiologicalReaction>
</comment>
<comment type="cofactor">
    <cofactor evidence="2">
        <name>Zn(2+)</name>
        <dbReference type="ChEBI" id="CHEBI:29105"/>
    </cofactor>
    <text evidence="2">Binds 3 Zn(2+) ions per subunit. Two zinc ions appear to be catalytic, while the third one seems to be structural.</text>
</comment>
<comment type="biophysicochemical properties">
    <kinetics>
        <KM evidence="2">5.4 mM for ascopyrone M</KM>
        <KM evidence="2">7.4 mM for glucosone</KM>
        <KM evidence="2">113 mM for xylosone</KM>
    </kinetics>
    <phDependence>
        <text evidence="1 3">Optimum pH is 5.8 for dehydration of anhydrofructose and 6.8 for isomerization of ascopyrone M (PubMed:15716041). Optimum pH is 6.0 for dehydration of 2-dehydro-D-glucopyranose (D-glucosone) (PubMed:8352649).</text>
    </phDependence>
</comment>
<comment type="pathway">
    <text evidence="8">Carbohydrate metabolism; 1,5-anhydro-D-fructose degradation.</text>
</comment>
<comment type="subunit">
    <text evidence="9">Homodimer.</text>
</comment>
<reference key="1">
    <citation type="journal article" date="2012" name="J. Mol. Biol.">
        <title>Crystal structure of bifunctional aldos-2-ulose dehydratase/isomerase from Phanerochaete chrysosporium with the reaction intermediate ascopyrone M.</title>
        <authorList>
            <person name="Claesson M."/>
            <person name="Lindqvist Y."/>
            <person name="Madrid S."/>
            <person name="Sandalova T."/>
            <person name="Fiskesund R."/>
            <person name="Yu S."/>
            <person name="Schneider G."/>
        </authorList>
    </citation>
    <scope>NUCLEOTIDE SEQUENCE</scope>
    <scope>X-RAY CRYSTALLOGRAPHY (2.0 ANGSTROMS) IN COMPLEXES WITH 1,5-ANHYDRO-D-FRUCTOSE; ASCOPYRONE M; ZINC AND MAGNESIUM</scope>
    <scope>FUNCTION</scope>
    <scope>CATALYTIC ACTIVITY</scope>
    <scope>COFACTOR</scope>
    <scope>SUBUNIT</scope>
    <scope>BIOPHYSICOCHEMICAL PROPERTIES</scope>
    <scope>REACTION MECHANISM</scope>
    <scope>ACTIVE SITE</scope>
    <source>
        <strain>ATCC 32629 / DSM 1547 / CBS 246.84 / BCRC 36201</strain>
    </source>
</reference>
<reference key="2">
    <citation type="journal article" date="2013" name="ACS Catal.">
        <title>Integration of chemical and biological catalysis: production of furylglycolic acid from glucose via cortalcerone.</title>
        <authorList>
            <person name="Schwartz T."/>
            <person name="Goodman S."/>
            <person name="Osmundsen C."/>
            <person name="Taarning E."/>
            <person name="Mozuch M."/>
            <person name="Gaskell J."/>
            <person name="Cullen D."/>
            <person name="Kersten P."/>
            <person name="Dumesic J.A."/>
        </authorList>
    </citation>
    <scope>NUCLEOTIDE SEQUENCE [MRNA]</scope>
    <scope>CATALYTIC ACTIVITY</scope>
    <source>
        <strain>ATCC 24725 / DSM 6909 / CBS 481.73 / BCRC 36200 / NRRL 6361 / VKM F-1767</strain>
    </source>
</reference>
<reference key="3">
    <citation type="journal article" date="2005" name="Biochim. Biophys. Acta">
        <title>Enzymatic description of the anhydrofructose pathway of glycogen degradation II. Gene identification and characterization of the reactions catalyzed by aldos-2-ulose dehydratase that converts 1,5-anhydro-d-fructose to microthecin with ascopyrone M as the intermediate.</title>
        <authorList>
            <person name="Yu S."/>
        </authorList>
    </citation>
    <scope>PROTEIN SEQUENCE OF 8-48; 64-104; 130-141; 241-251; 305-337; 338-373; 458-491; 552-571; 769-845 AND 849-874</scope>
    <scope>FUNCTION</scope>
    <scope>CATALYTIC ACTIVITY</scope>
    <scope>BIOPHYSICOCHEMICAL PROPERTIES</scope>
    <scope>PATHWAY</scope>
    <source>
        <strain>ATCC 32629 / DSM 1547 / CBS 246.84 / BCRC 36201</strain>
    </source>
</reference>
<reference key="4">
    <citation type="journal article" date="1993" name="Arch. Microbiol.">
        <title>Pyranosone dehydratase from the basidiomycete Phanerochaete chrysosporium: improved purification, and identification of 6-deoxy-D-glucosone and D-xylosone reaction products.</title>
        <authorList>
            <person name="Gabriel J."/>
            <person name="Volc J."/>
            <person name="Sedmera P."/>
            <person name="Daniel G."/>
            <person name="Kubatova E."/>
        </authorList>
    </citation>
    <scope>FUNCTION</scope>
    <scope>CATALYTIC ACTIVITY</scope>
    <scope>BIOPHYSICOCHEMICAL PROPERTIES</scope>
</reference>
<evidence type="ECO:0000269" key="1">
    <source>
    </source>
</evidence>
<evidence type="ECO:0000269" key="2">
    <source>
    </source>
</evidence>
<evidence type="ECO:0000269" key="3">
    <source>
    </source>
</evidence>
<evidence type="ECO:0000303" key="4">
    <source>
    </source>
</evidence>
<evidence type="ECO:0000303" key="5">
    <source>
    </source>
</evidence>
<evidence type="ECO:0000303" key="6">
    <source>
    </source>
</evidence>
<evidence type="ECO:0000305" key="7"/>
<evidence type="ECO:0000305" key="8">
    <source>
    </source>
</evidence>
<evidence type="ECO:0000305" key="9">
    <source>
    </source>
</evidence>
<evidence type="ECO:0000305" key="10">
    <source>
    </source>
</evidence>
<evidence type="ECO:0000305" key="11">
    <source ref="2"/>
</evidence>
<evidence type="ECO:0007744" key="12">
    <source>
        <dbReference type="PDB" id="4A7K"/>
    </source>
</evidence>
<evidence type="ECO:0007744" key="13">
    <source>
        <dbReference type="PDB" id="4A7Y"/>
    </source>
</evidence>
<evidence type="ECO:0007744" key="14">
    <source>
        <dbReference type="PDB" id="4A7Z"/>
    </source>
</evidence>
<evidence type="ECO:0007829" key="15">
    <source>
        <dbReference type="PDB" id="4A7K"/>
    </source>
</evidence>
<evidence type="ECO:0007829" key="16">
    <source>
        <dbReference type="PDB" id="4A7Y"/>
    </source>
</evidence>
<evidence type="ECO:0007829" key="17">
    <source>
        <dbReference type="PDB" id="4A7Z"/>
    </source>
</evidence>
<keyword id="KW-0002">3D-structure</keyword>
<keyword id="KW-0903">Direct protein sequencing</keyword>
<keyword id="KW-0413">Isomerase</keyword>
<keyword id="KW-0456">Lyase</keyword>
<keyword id="KW-0460">Magnesium</keyword>
<keyword id="KW-0479">Metal-binding</keyword>
<keyword id="KW-0511">Multifunctional enzyme</keyword>
<keyword id="KW-0862">Zinc</keyword>
<feature type="chain" id="PRO_0000064763" description="Aldos-2-ulose dehydratase">
    <location>
        <begin position="1"/>
        <end position="900"/>
    </location>
</feature>
<feature type="region of interest" description="Dehydratase domain" evidence="5">
    <location>
        <begin position="1"/>
        <end position="433"/>
    </location>
</feature>
<feature type="region of interest" description="Isomerase domain" evidence="5">
    <location>
        <begin position="434"/>
        <end position="739"/>
    </location>
</feature>
<feature type="active site" description="Proton acceptor" evidence="9">
    <location>
        <position position="155"/>
    </location>
</feature>
<feature type="binding site" evidence="2 14">
    <location>
        <position position="35"/>
    </location>
    <ligand>
        <name>ascopyrone M</name>
        <dbReference type="ChEBI" id="CHEBI:50070"/>
        <label>1</label>
    </ligand>
</feature>
<feature type="binding site" evidence="2 12">
    <location>
        <position position="101"/>
    </location>
    <ligand>
        <name>Mg(2+)</name>
        <dbReference type="ChEBI" id="CHEBI:18420"/>
        <note>structural</note>
    </ligand>
</feature>
<feature type="binding site" evidence="2 12">
    <location>
        <position position="103"/>
    </location>
    <ligand>
        <name>Mg(2+)</name>
        <dbReference type="ChEBI" id="CHEBI:18420"/>
        <note>structural</note>
    </ligand>
</feature>
<feature type="binding site" evidence="2 12">
    <location>
        <position position="105"/>
    </location>
    <ligand>
        <name>Mg(2+)</name>
        <dbReference type="ChEBI" id="CHEBI:18420"/>
        <note>structural</note>
    </ligand>
</feature>
<feature type="binding site" evidence="2 12">
    <location>
        <position position="107"/>
    </location>
    <ligand>
        <name>Mg(2+)</name>
        <dbReference type="ChEBI" id="CHEBI:18420"/>
        <note>structural</note>
    </ligand>
</feature>
<feature type="binding site" evidence="2 12">
    <location>
        <position position="109"/>
    </location>
    <ligand>
        <name>Mg(2+)</name>
        <dbReference type="ChEBI" id="CHEBI:18420"/>
        <note>structural</note>
    </ligand>
</feature>
<feature type="binding site" evidence="2 14">
    <location>
        <position position="116"/>
    </location>
    <ligand>
        <name>ascopyrone M</name>
        <dbReference type="ChEBI" id="CHEBI:50070"/>
        <label>1</label>
    </ligand>
</feature>
<feature type="binding site" evidence="2 14">
    <location>
        <position position="120"/>
    </location>
    <ligand>
        <name>ascopyrone M</name>
        <dbReference type="ChEBI" id="CHEBI:50070"/>
        <label>1</label>
    </ligand>
</feature>
<feature type="binding site" evidence="2 14">
    <location>
        <position position="155"/>
    </location>
    <ligand>
        <name>ascopyrone M</name>
        <dbReference type="ChEBI" id="CHEBI:50070"/>
        <label>1</label>
    </ligand>
</feature>
<feature type="binding site" evidence="2 14">
    <location>
        <position position="215"/>
    </location>
    <ligand>
        <name>ascopyrone M</name>
        <dbReference type="ChEBI" id="CHEBI:50070"/>
        <label>1</label>
    </ligand>
</feature>
<feature type="binding site" evidence="2 12">
    <location>
        <position position="215"/>
    </location>
    <ligand>
        <name>Zn(2+)</name>
        <dbReference type="ChEBI" id="CHEBI:29105"/>
        <label>1</label>
        <note>catalytic</note>
    </ligand>
</feature>
<feature type="binding site" evidence="2 14">
    <location>
        <position position="295"/>
    </location>
    <ligand>
        <name>ascopyrone M</name>
        <dbReference type="ChEBI" id="CHEBI:50070"/>
        <label>1</label>
    </ligand>
</feature>
<feature type="binding site" evidence="2 12">
    <location>
        <position position="295"/>
    </location>
    <ligand>
        <name>Zn(2+)</name>
        <dbReference type="ChEBI" id="CHEBI:29105"/>
        <label>1</label>
        <note>catalytic</note>
    </ligand>
</feature>
<feature type="binding site" evidence="2 14">
    <location>
        <position position="337"/>
    </location>
    <ligand>
        <name>ascopyrone M</name>
        <dbReference type="ChEBI" id="CHEBI:50070"/>
        <label>1</label>
    </ligand>
</feature>
<feature type="binding site" evidence="2 12">
    <location>
        <position position="337"/>
    </location>
    <ligand>
        <name>Zn(2+)</name>
        <dbReference type="ChEBI" id="CHEBI:29105"/>
        <label>1</label>
        <note>catalytic</note>
    </ligand>
</feature>
<feature type="binding site" evidence="2 12">
    <location>
        <position position="343"/>
    </location>
    <ligand>
        <name>Zn(2+)</name>
        <dbReference type="ChEBI" id="CHEBI:29105"/>
        <label>2</label>
        <note>structural</note>
    </ligand>
</feature>
<feature type="binding site" evidence="2 12">
    <location>
        <position position="345"/>
    </location>
    <ligand>
        <name>Zn(2+)</name>
        <dbReference type="ChEBI" id="CHEBI:29105"/>
        <label>2</label>
        <note>structural</note>
    </ligand>
</feature>
<feature type="binding site" evidence="2 12">
    <location>
        <position position="347"/>
    </location>
    <ligand>
        <name>Zn(2+)</name>
        <dbReference type="ChEBI" id="CHEBI:29105"/>
        <label>2</label>
        <note>structural</note>
    </ligand>
</feature>
<feature type="binding site" evidence="2 12">
    <location>
        <position position="349"/>
    </location>
    <ligand>
        <name>Zn(2+)</name>
        <dbReference type="ChEBI" id="CHEBI:29105"/>
        <label>2</label>
        <note>structural</note>
    </ligand>
</feature>
<feature type="binding site" evidence="2 12">
    <location>
        <position position="351"/>
    </location>
    <ligand>
        <name>Zn(2+)</name>
        <dbReference type="ChEBI" id="CHEBI:29105"/>
        <label>2</label>
        <note>structural</note>
    </ligand>
</feature>
<feature type="binding site" evidence="2 14">
    <location>
        <position position="414"/>
    </location>
    <ligand>
        <name>ascopyrone M</name>
        <dbReference type="ChEBI" id="CHEBI:50070"/>
        <label>1</label>
    </ligand>
</feature>
<feature type="binding site" evidence="2 14">
    <location>
        <position position="419"/>
    </location>
    <ligand>
        <name>ascopyrone M</name>
        <dbReference type="ChEBI" id="CHEBI:50070"/>
        <label>1</label>
    </ligand>
</feature>
<feature type="binding site" evidence="2 13">
    <location>
        <position position="627"/>
    </location>
    <ligand>
        <name>1,5-anhydro-D-fructose</name>
        <dbReference type="ChEBI" id="CHEBI:16715"/>
    </ligand>
</feature>
<feature type="binding site" evidence="2 14">
    <location>
        <position position="627"/>
    </location>
    <ligand>
        <name>ascopyrone M</name>
        <dbReference type="ChEBI" id="CHEBI:50070"/>
        <label>2</label>
    </ligand>
</feature>
<feature type="binding site" evidence="2 13">
    <location>
        <position position="630"/>
    </location>
    <ligand>
        <name>1,5-anhydro-D-fructose</name>
        <dbReference type="ChEBI" id="CHEBI:16715"/>
    </ligand>
</feature>
<feature type="binding site" evidence="2 12">
    <location>
        <position position="630"/>
    </location>
    <ligand>
        <name>Zn(2+)</name>
        <dbReference type="ChEBI" id="CHEBI:29105"/>
        <label>3</label>
        <note>catalytic</note>
    </ligand>
</feature>
<feature type="binding site" evidence="2 12">
    <location>
        <position position="632"/>
    </location>
    <ligand>
        <name>Zn(2+)</name>
        <dbReference type="ChEBI" id="CHEBI:29105"/>
        <label>3</label>
        <note>catalytic</note>
    </ligand>
</feature>
<feature type="binding site" evidence="2 14">
    <location>
        <position position="639"/>
    </location>
    <ligand>
        <name>ascopyrone M</name>
        <dbReference type="ChEBI" id="CHEBI:50070"/>
        <label>2</label>
    </ligand>
</feature>
<feature type="binding site" evidence="2 12">
    <location>
        <position position="639"/>
    </location>
    <ligand>
        <name>Zn(2+)</name>
        <dbReference type="ChEBI" id="CHEBI:29105"/>
        <label>3</label>
        <note>catalytic</note>
    </ligand>
</feature>
<feature type="binding site" evidence="2 13">
    <location>
        <position position="641"/>
    </location>
    <ligand>
        <name>1,5-anhydro-D-fructose</name>
        <dbReference type="ChEBI" id="CHEBI:16715"/>
    </ligand>
</feature>
<feature type="binding site" evidence="2 14">
    <location>
        <position position="641"/>
    </location>
    <ligand>
        <name>ascopyrone M</name>
        <dbReference type="ChEBI" id="CHEBI:50070"/>
        <label>2</label>
    </ligand>
</feature>
<feature type="binding site" evidence="2 12">
    <location>
        <position position="709"/>
    </location>
    <ligand>
        <name>Zn(2+)</name>
        <dbReference type="ChEBI" id="CHEBI:29105"/>
        <label>3</label>
        <note>catalytic</note>
    </ligand>
</feature>
<feature type="binding site" evidence="2 13">
    <location>
        <position position="726"/>
    </location>
    <ligand>
        <name>1,5-anhydro-D-fructose</name>
        <dbReference type="ChEBI" id="CHEBI:16715"/>
    </ligand>
</feature>
<feature type="binding site" evidence="2 14">
    <location>
        <position position="726"/>
    </location>
    <ligand>
        <name>ascopyrone M</name>
        <dbReference type="ChEBI" id="CHEBI:50070"/>
        <label>2</label>
    </ligand>
</feature>
<feature type="sequence conflict" description="In Ref. 2; AGY31289 and 3; AA sequence." evidence="7" ref="2 3">
    <original>L</original>
    <variation>F</variation>
    <location>
        <position position="69"/>
    </location>
</feature>
<feature type="sequence conflict" description="In Ref. 2; AGY31289 and 3; AA sequence." evidence="7" ref="2 3">
    <original>P</original>
    <variation>S</variation>
    <location>
        <position position="87"/>
    </location>
</feature>
<feature type="sequence conflict" description="In Ref. 2; AGY31289." evidence="7" ref="2">
    <original>R</original>
    <variation>K</variation>
    <location>
        <position position="254"/>
    </location>
</feature>
<feature type="sequence conflict" description="In Ref. 3; AA sequence." evidence="7" ref="3">
    <original>P</original>
    <variation>PP</variation>
    <location>
        <position position="798"/>
    </location>
</feature>
<feature type="sequence conflict" description="In Ref. 2; AGY31289." evidence="7" ref="2">
    <original>E</original>
    <variation>G</variation>
    <location>
        <position position="876"/>
    </location>
</feature>
<feature type="strand" evidence="15">
    <location>
        <begin position="21"/>
        <end position="28"/>
    </location>
</feature>
<feature type="strand" evidence="15">
    <location>
        <begin position="36"/>
        <end position="40"/>
    </location>
</feature>
<feature type="strand" evidence="17">
    <location>
        <begin position="42"/>
        <end position="45"/>
    </location>
</feature>
<feature type="strand" evidence="15">
    <location>
        <begin position="51"/>
        <end position="55"/>
    </location>
</feature>
<feature type="strand" evidence="17">
    <location>
        <begin position="60"/>
        <end position="62"/>
    </location>
</feature>
<feature type="strand" evidence="15">
    <location>
        <begin position="64"/>
        <end position="70"/>
    </location>
</feature>
<feature type="helix" evidence="17">
    <location>
        <begin position="72"/>
        <end position="74"/>
    </location>
</feature>
<feature type="strand" evidence="17">
    <location>
        <begin position="75"/>
        <end position="77"/>
    </location>
</feature>
<feature type="strand" evidence="15">
    <location>
        <begin position="84"/>
        <end position="93"/>
    </location>
</feature>
<feature type="strand" evidence="15">
    <location>
        <begin position="97"/>
        <end position="100"/>
    </location>
</feature>
<feature type="strand" evidence="15">
    <location>
        <begin position="105"/>
        <end position="107"/>
    </location>
</feature>
<feature type="strand" evidence="15">
    <location>
        <begin position="109"/>
        <end position="114"/>
    </location>
</feature>
<feature type="strand" evidence="15">
    <location>
        <begin position="117"/>
        <end position="119"/>
    </location>
</feature>
<feature type="strand" evidence="15">
    <location>
        <begin position="129"/>
        <end position="133"/>
    </location>
</feature>
<feature type="strand" evidence="15">
    <location>
        <begin position="137"/>
        <end position="139"/>
    </location>
</feature>
<feature type="strand" evidence="15">
    <location>
        <begin position="145"/>
        <end position="150"/>
    </location>
</feature>
<feature type="strand" evidence="15">
    <location>
        <begin position="154"/>
        <end position="160"/>
    </location>
</feature>
<feature type="strand" evidence="15">
    <location>
        <begin position="165"/>
        <end position="167"/>
    </location>
</feature>
<feature type="strand" evidence="15">
    <location>
        <begin position="169"/>
        <end position="175"/>
    </location>
</feature>
<feature type="strand" evidence="15">
    <location>
        <begin position="186"/>
        <end position="192"/>
    </location>
</feature>
<feature type="strand" evidence="15">
    <location>
        <begin position="204"/>
        <end position="213"/>
    </location>
</feature>
<feature type="strand" evidence="15">
    <location>
        <begin position="216"/>
        <end position="220"/>
    </location>
</feature>
<feature type="helix" evidence="15">
    <location>
        <begin position="222"/>
        <end position="225"/>
    </location>
</feature>
<feature type="strand" evidence="15">
    <location>
        <begin position="233"/>
        <end position="238"/>
    </location>
</feature>
<feature type="strand" evidence="15">
    <location>
        <begin position="241"/>
        <end position="247"/>
    </location>
</feature>
<feature type="strand" evidence="15">
    <location>
        <begin position="252"/>
        <end position="258"/>
    </location>
</feature>
<feature type="strand" evidence="15">
    <location>
        <begin position="273"/>
        <end position="280"/>
    </location>
</feature>
<feature type="strand" evidence="15">
    <location>
        <begin position="283"/>
        <end position="293"/>
    </location>
</feature>
<feature type="strand" evidence="15">
    <location>
        <begin position="297"/>
        <end position="303"/>
    </location>
</feature>
<feature type="strand" evidence="15">
    <location>
        <begin position="310"/>
        <end position="312"/>
    </location>
</feature>
<feature type="strand" evidence="15">
    <location>
        <begin position="318"/>
        <end position="324"/>
    </location>
</feature>
<feature type="strand" evidence="15">
    <location>
        <begin position="335"/>
        <end position="342"/>
    </location>
</feature>
<feature type="strand" evidence="15">
    <location>
        <begin position="346"/>
        <end position="349"/>
    </location>
</feature>
<feature type="strand" evidence="15">
    <location>
        <begin position="351"/>
        <end position="357"/>
    </location>
</feature>
<feature type="helix" evidence="15">
    <location>
        <begin position="364"/>
        <end position="366"/>
    </location>
</feature>
<feature type="strand" evidence="15">
    <location>
        <begin position="367"/>
        <end position="376"/>
    </location>
</feature>
<feature type="turn" evidence="15">
    <location>
        <begin position="377"/>
        <end position="380"/>
    </location>
</feature>
<feature type="strand" evidence="15">
    <location>
        <begin position="381"/>
        <end position="388"/>
    </location>
</feature>
<feature type="strand" evidence="15">
    <location>
        <begin position="393"/>
        <end position="398"/>
    </location>
</feature>
<feature type="strand" evidence="15">
    <location>
        <begin position="401"/>
        <end position="405"/>
    </location>
</feature>
<feature type="strand" evidence="15">
    <location>
        <begin position="408"/>
        <end position="412"/>
    </location>
</feature>
<feature type="turn" evidence="15">
    <location>
        <begin position="417"/>
        <end position="419"/>
    </location>
</feature>
<feature type="strand" evidence="15">
    <location>
        <begin position="427"/>
        <end position="439"/>
    </location>
</feature>
<feature type="strand" evidence="15">
    <location>
        <begin position="441"/>
        <end position="448"/>
    </location>
</feature>
<feature type="helix" evidence="15">
    <location>
        <begin position="451"/>
        <end position="453"/>
    </location>
</feature>
<feature type="strand" evidence="15">
    <location>
        <begin position="458"/>
        <end position="465"/>
    </location>
</feature>
<feature type="strand" evidence="15">
    <location>
        <begin position="468"/>
        <end position="475"/>
    </location>
</feature>
<feature type="strand" evidence="15">
    <location>
        <begin position="480"/>
        <end position="482"/>
    </location>
</feature>
<feature type="turn" evidence="15">
    <location>
        <begin position="485"/>
        <end position="487"/>
    </location>
</feature>
<feature type="strand" evidence="15">
    <location>
        <begin position="489"/>
        <end position="501"/>
    </location>
</feature>
<feature type="strand" evidence="15">
    <location>
        <begin position="504"/>
        <end position="508"/>
    </location>
</feature>
<feature type="strand" evidence="15">
    <location>
        <begin position="517"/>
        <end position="519"/>
    </location>
</feature>
<feature type="strand" evidence="15">
    <location>
        <begin position="524"/>
        <end position="541"/>
    </location>
</feature>
<feature type="strand" evidence="15">
    <location>
        <begin position="543"/>
        <end position="545"/>
    </location>
</feature>
<feature type="helix" evidence="15">
    <location>
        <begin position="553"/>
        <end position="556"/>
    </location>
</feature>
<feature type="helix" evidence="15">
    <location>
        <begin position="568"/>
        <end position="571"/>
    </location>
</feature>
<feature type="helix" evidence="15">
    <location>
        <begin position="580"/>
        <end position="582"/>
    </location>
</feature>
<feature type="turn" evidence="16">
    <location>
        <begin position="587"/>
        <end position="592"/>
    </location>
</feature>
<feature type="strand" evidence="15">
    <location>
        <begin position="595"/>
        <end position="605"/>
    </location>
</feature>
<feature type="strand" evidence="15">
    <location>
        <begin position="612"/>
        <end position="621"/>
    </location>
</feature>
<feature type="strand" evidence="15">
    <location>
        <begin position="638"/>
        <end position="645"/>
    </location>
</feature>
<feature type="strand" evidence="15">
    <location>
        <begin position="647"/>
        <end position="649"/>
    </location>
</feature>
<feature type="strand" evidence="15">
    <location>
        <begin position="652"/>
        <end position="656"/>
    </location>
</feature>
<feature type="helix" evidence="15">
    <location>
        <begin position="660"/>
        <end position="662"/>
    </location>
</feature>
<feature type="strand" evidence="16">
    <location>
        <begin position="665"/>
        <end position="667"/>
    </location>
</feature>
<feature type="helix" evidence="15">
    <location>
        <begin position="670"/>
        <end position="672"/>
    </location>
</feature>
<feature type="strand" evidence="15">
    <location>
        <begin position="673"/>
        <end position="677"/>
    </location>
</feature>
<feature type="strand" evidence="15">
    <location>
        <begin position="682"/>
        <end position="684"/>
    </location>
</feature>
<feature type="strand" evidence="15">
    <location>
        <begin position="708"/>
        <end position="712"/>
    </location>
</feature>
<feature type="strand" evidence="15">
    <location>
        <begin position="724"/>
        <end position="731"/>
    </location>
</feature>
<feature type="strand" evidence="15">
    <location>
        <begin position="749"/>
        <end position="757"/>
    </location>
</feature>
<feature type="strand" evidence="15">
    <location>
        <begin position="760"/>
        <end position="766"/>
    </location>
</feature>
<feature type="helix" evidence="15">
    <location>
        <begin position="767"/>
        <end position="769"/>
    </location>
</feature>
<feature type="strand" evidence="15">
    <location>
        <begin position="775"/>
        <end position="781"/>
    </location>
</feature>
<feature type="strand" evidence="15">
    <location>
        <begin position="792"/>
        <end position="796"/>
    </location>
</feature>
<feature type="strand" evidence="15">
    <location>
        <begin position="803"/>
        <end position="807"/>
    </location>
</feature>
<feature type="turn" evidence="15">
    <location>
        <begin position="808"/>
        <end position="810"/>
    </location>
</feature>
<feature type="strand" evidence="15">
    <location>
        <begin position="813"/>
        <end position="816"/>
    </location>
</feature>
<feature type="strand" evidence="15">
    <location>
        <begin position="824"/>
        <end position="831"/>
    </location>
</feature>
<feature type="helix" evidence="15">
    <location>
        <begin position="834"/>
        <end position="836"/>
    </location>
</feature>
<feature type="turn" evidence="15">
    <location>
        <begin position="837"/>
        <end position="839"/>
    </location>
</feature>
<feature type="strand" evidence="15">
    <location>
        <begin position="841"/>
        <end position="845"/>
    </location>
</feature>
<feature type="strand" evidence="15">
    <location>
        <begin position="851"/>
        <end position="854"/>
    </location>
</feature>
<feature type="strand" evidence="15">
    <location>
        <begin position="859"/>
        <end position="861"/>
    </location>
</feature>
<feature type="strand" evidence="15">
    <location>
        <begin position="865"/>
        <end position="869"/>
    </location>
</feature>
<feature type="strand" evidence="15">
    <location>
        <begin position="879"/>
        <end position="887"/>
    </location>
</feature>
<feature type="helix" evidence="15">
    <location>
        <begin position="889"/>
        <end position="892"/>
    </location>
</feature>
<feature type="strand" evidence="15">
    <location>
        <begin position="894"/>
        <end position="898"/>
    </location>
</feature>
<accession>P84193</accession>
<accession>U5NJV3</accession>
<dbReference type="EC" id="4.2.1.110" evidence="1 2 3"/>
<dbReference type="EMBL" id="KF699142">
    <property type="protein sequence ID" value="AGY31289.1"/>
    <property type="molecule type" value="mRNA"/>
</dbReference>
<dbReference type="PDB" id="4A7K">
    <property type="method" value="X-ray"/>
    <property type="resolution" value="2.00 A"/>
    <property type="chains" value="A=1-900"/>
</dbReference>
<dbReference type="PDB" id="4A7Y">
    <property type="method" value="X-ray"/>
    <property type="resolution" value="2.80 A"/>
    <property type="chains" value="A=1-900"/>
</dbReference>
<dbReference type="PDB" id="4A7Z">
    <property type="method" value="X-ray"/>
    <property type="resolution" value="2.60 A"/>
    <property type="chains" value="A=1-900"/>
</dbReference>
<dbReference type="PDBsum" id="4A7K"/>
<dbReference type="PDBsum" id="4A7Y"/>
<dbReference type="PDBsum" id="4A7Z"/>
<dbReference type="SMR" id="P84193"/>
<dbReference type="KEGG" id="ag:AGY31289"/>
<dbReference type="VEuPathDB" id="FungiDB:AGR57_3658"/>
<dbReference type="BioCyc" id="MetaCyc:MONOMER-19294"/>
<dbReference type="BRENDA" id="4.2.1.110">
    <property type="organism ID" value="1380"/>
</dbReference>
<dbReference type="BRENDA" id="5.3.2.7">
    <property type="organism ID" value="1380"/>
</dbReference>
<dbReference type="UniPathway" id="UPA00738"/>
<dbReference type="EvolutionaryTrace" id="P84193"/>
<dbReference type="GO" id="GO:0033992">
    <property type="term" value="F:1,5-anhydro-D-fructose dehydratase activity"/>
    <property type="evidence" value="ECO:0007669"/>
    <property type="project" value="RHEA"/>
</dbReference>
<dbReference type="GO" id="GO:0033991">
    <property type="term" value="F:aldos-2-ulose dehydratase activity"/>
    <property type="evidence" value="ECO:0007669"/>
    <property type="project" value="UniProtKB-EC"/>
</dbReference>
<dbReference type="GO" id="GO:0016836">
    <property type="term" value="F:hydro-lyase activity"/>
    <property type="evidence" value="ECO:0000314"/>
    <property type="project" value="UniProtKB"/>
</dbReference>
<dbReference type="GO" id="GO:0016853">
    <property type="term" value="F:isomerase activity"/>
    <property type="evidence" value="ECO:0000314"/>
    <property type="project" value="UniProtKB"/>
</dbReference>
<dbReference type="GO" id="GO:0046872">
    <property type="term" value="F:metal ion binding"/>
    <property type="evidence" value="ECO:0007669"/>
    <property type="project" value="UniProtKB-KW"/>
</dbReference>
<dbReference type="Gene3D" id="2.60.120.990">
    <property type="match status" value="1"/>
</dbReference>
<dbReference type="Gene3D" id="2.80.10.50">
    <property type="match status" value="1"/>
</dbReference>
<dbReference type="InterPro" id="IPR054583">
    <property type="entry name" value="AUDH_b-propeller"/>
</dbReference>
<dbReference type="InterPro" id="IPR040887">
    <property type="entry name" value="AUDH_Cupin"/>
</dbReference>
<dbReference type="InterPro" id="IPR028994">
    <property type="entry name" value="Integrin_alpha_N"/>
</dbReference>
<dbReference type="Pfam" id="PF22301">
    <property type="entry name" value="AUDH_beta_propeller"/>
    <property type="match status" value="1"/>
</dbReference>
<dbReference type="Pfam" id="PF18637">
    <property type="entry name" value="AUDH_Cupin"/>
    <property type="match status" value="1"/>
</dbReference>
<dbReference type="SUPFAM" id="SSF69318">
    <property type="entry name" value="Integrin alpha N-terminal domain"/>
    <property type="match status" value="1"/>
</dbReference>
<name>AUD_PHACH</name>
<organism>
    <name type="scientific">Phanerodontia chrysosporium</name>
    <name type="common">White-rot fungus</name>
    <name type="synonym">Sporotrichum pruinosum</name>
    <dbReference type="NCBI Taxonomy" id="2822231"/>
    <lineage>
        <taxon>Eukaryota</taxon>
        <taxon>Fungi</taxon>
        <taxon>Dikarya</taxon>
        <taxon>Basidiomycota</taxon>
        <taxon>Agaricomycotina</taxon>
        <taxon>Agaricomycetes</taxon>
        <taxon>Polyporales</taxon>
        <taxon>Phanerochaetaceae</taxon>
        <taxon>Phanerodontia</taxon>
    </lineage>
</organism>
<protein>
    <recommendedName>
        <fullName evidence="4">Aldos-2-ulose dehydratase</fullName>
        <shortName evidence="4">AUDH</shortName>
        <ecNumber evidence="1 2 3">4.2.1.110</ecNumber>
    </recommendedName>
    <alternativeName>
        <fullName evidence="5">Aldos-2-ulose dehydratase/isomerase</fullName>
    </alternativeName>
    <alternativeName>
        <fullName>D-arabino-hex-2-ulose dehydratase</fullName>
    </alternativeName>
    <alternativeName>
        <fullName evidence="6">Pyranosone dehydratase</fullName>
    </alternativeName>
</protein>